<protein>
    <recommendedName>
        <fullName evidence="1">tRNA uridine 5-carboxymethylaminomethyl modification enzyme MnmG</fullName>
    </recommendedName>
    <alternativeName>
        <fullName evidence="1">Glucose-inhibited division protein A</fullName>
    </alternativeName>
</protein>
<sequence>MHFHERFDVIVVGGGHAGTEAALAAARMGSKTLLLTHNIDTLGQMSCNPAIGGIGKGHLVKEIDALGGAMATATDFAGIQFRTLNSSKGPAVRATRAQADRALYRQKIQHILQNQPNLRIFQQAVDDLVVENDKVIGVVTQMGLAFEAPAIVLTTGTFLSGKIHIGMQNYSGGRAGDPPAIALANRLRELNIRVGRLKTGTPPRIDANTIDFTQMTEQKGDTPLPVMSFIGDVSQHPRQVSCFITHTNEKTHDIIRGGLDRSPMYSGVIEGIGPRYCPSIEDKIHRFADKSSHQIFIEPEGLSTNEIYPNGISTSLPFDVQLNLVRSIKGMENAEIMRPGYAIEYDYFDPRDLKNSLETKAIEGLYFAGQINGTTGYEEAGAQGLLAGMNASLQVQGKTAWCPRRDEAYLGVLVDDLSTLGTKEPYRMFTSRAEYRLLLREDNADLRLTEKGRELGLVDDKRWESFIAKRESIELELQRLRSQWVHPNSALLGVLNPELNTPISREASFEDLLRRPEMDYAKLMSLEGFGPGLDDQQAAEQVQIQVKYSGYIQRQQDEIDKAIRHENSLLPLDLDYQEVPGLSNEVIAKLNNHKPDTVGQASRISGITPAAISILLVHLKKRGLLRKIA</sequence>
<keyword id="KW-0963">Cytoplasm</keyword>
<keyword id="KW-0274">FAD</keyword>
<keyword id="KW-0285">Flavoprotein</keyword>
<keyword id="KW-0520">NAD</keyword>
<keyword id="KW-1185">Reference proteome</keyword>
<keyword id="KW-0819">tRNA processing</keyword>
<comment type="function">
    <text evidence="1">NAD-binding protein involved in the addition of a carboxymethylaminomethyl (cmnm) group at the wobble position (U34) of certain tRNAs, forming tRNA-cmnm(5)s(2)U34.</text>
</comment>
<comment type="cofactor">
    <cofactor evidence="1">
        <name>FAD</name>
        <dbReference type="ChEBI" id="CHEBI:57692"/>
    </cofactor>
</comment>
<comment type="subunit">
    <text evidence="1">Homodimer. Heterotetramer of two MnmE and two MnmG subunits.</text>
</comment>
<comment type="subcellular location">
    <subcellularLocation>
        <location evidence="1">Cytoplasm</location>
    </subcellularLocation>
</comment>
<comment type="similarity">
    <text evidence="1">Belongs to the MnmG family.</text>
</comment>
<dbReference type="EMBL" id="CP000447">
    <property type="protein sequence ID" value="ABI73881.1"/>
    <property type="molecule type" value="Genomic_DNA"/>
</dbReference>
<dbReference type="RefSeq" id="WP_011639461.1">
    <property type="nucleotide sequence ID" value="NC_008345.1"/>
</dbReference>
<dbReference type="SMR" id="Q07VT3"/>
<dbReference type="STRING" id="318167.Sfri_4056"/>
<dbReference type="KEGG" id="sfr:Sfri_4056"/>
<dbReference type="eggNOG" id="COG0445">
    <property type="taxonomic scope" value="Bacteria"/>
</dbReference>
<dbReference type="HOGENOM" id="CLU_007831_2_2_6"/>
<dbReference type="OrthoDB" id="9815560at2"/>
<dbReference type="Proteomes" id="UP000000684">
    <property type="component" value="Chromosome"/>
</dbReference>
<dbReference type="GO" id="GO:0005829">
    <property type="term" value="C:cytosol"/>
    <property type="evidence" value="ECO:0007669"/>
    <property type="project" value="TreeGrafter"/>
</dbReference>
<dbReference type="GO" id="GO:0050660">
    <property type="term" value="F:flavin adenine dinucleotide binding"/>
    <property type="evidence" value="ECO:0007669"/>
    <property type="project" value="UniProtKB-UniRule"/>
</dbReference>
<dbReference type="GO" id="GO:0030488">
    <property type="term" value="P:tRNA methylation"/>
    <property type="evidence" value="ECO:0007669"/>
    <property type="project" value="TreeGrafter"/>
</dbReference>
<dbReference type="GO" id="GO:0002098">
    <property type="term" value="P:tRNA wobble uridine modification"/>
    <property type="evidence" value="ECO:0007669"/>
    <property type="project" value="InterPro"/>
</dbReference>
<dbReference type="FunFam" id="1.10.10.1800:FF:000001">
    <property type="entry name" value="tRNA uridine 5-carboxymethylaminomethyl modification enzyme MnmG"/>
    <property type="match status" value="1"/>
</dbReference>
<dbReference type="FunFam" id="1.10.150.570:FF:000001">
    <property type="entry name" value="tRNA uridine 5-carboxymethylaminomethyl modification enzyme MnmG"/>
    <property type="match status" value="1"/>
</dbReference>
<dbReference type="FunFam" id="3.50.50.60:FF:000002">
    <property type="entry name" value="tRNA uridine 5-carboxymethylaminomethyl modification enzyme MnmG"/>
    <property type="match status" value="1"/>
</dbReference>
<dbReference type="FunFam" id="3.50.50.60:FF:000010">
    <property type="entry name" value="tRNA uridine 5-carboxymethylaminomethyl modification enzyme MnmG"/>
    <property type="match status" value="1"/>
</dbReference>
<dbReference type="Gene3D" id="3.50.50.60">
    <property type="entry name" value="FAD/NAD(P)-binding domain"/>
    <property type="match status" value="2"/>
</dbReference>
<dbReference type="Gene3D" id="1.10.150.570">
    <property type="entry name" value="GidA associated domain, C-terminal subdomain"/>
    <property type="match status" value="1"/>
</dbReference>
<dbReference type="Gene3D" id="1.10.10.1800">
    <property type="entry name" value="tRNA uridine 5-carboxymethylaminomethyl modification enzyme MnmG/GidA"/>
    <property type="match status" value="1"/>
</dbReference>
<dbReference type="HAMAP" id="MF_00129">
    <property type="entry name" value="MnmG_GidA"/>
    <property type="match status" value="1"/>
</dbReference>
<dbReference type="InterPro" id="IPR036188">
    <property type="entry name" value="FAD/NAD-bd_sf"/>
</dbReference>
<dbReference type="InterPro" id="IPR049312">
    <property type="entry name" value="GIDA_C_N"/>
</dbReference>
<dbReference type="InterPro" id="IPR004416">
    <property type="entry name" value="MnmG"/>
</dbReference>
<dbReference type="InterPro" id="IPR002218">
    <property type="entry name" value="MnmG-rel"/>
</dbReference>
<dbReference type="InterPro" id="IPR020595">
    <property type="entry name" value="MnmG-rel_CS"/>
</dbReference>
<dbReference type="InterPro" id="IPR026904">
    <property type="entry name" value="MnmG_C"/>
</dbReference>
<dbReference type="InterPro" id="IPR047001">
    <property type="entry name" value="MnmG_C_subdom"/>
</dbReference>
<dbReference type="InterPro" id="IPR044920">
    <property type="entry name" value="MnmG_C_subdom_sf"/>
</dbReference>
<dbReference type="InterPro" id="IPR040131">
    <property type="entry name" value="MnmG_N"/>
</dbReference>
<dbReference type="NCBIfam" id="TIGR00136">
    <property type="entry name" value="mnmG_gidA"/>
    <property type="match status" value="1"/>
</dbReference>
<dbReference type="PANTHER" id="PTHR11806">
    <property type="entry name" value="GLUCOSE INHIBITED DIVISION PROTEIN A"/>
    <property type="match status" value="1"/>
</dbReference>
<dbReference type="PANTHER" id="PTHR11806:SF0">
    <property type="entry name" value="PROTEIN MTO1 HOMOLOG, MITOCHONDRIAL"/>
    <property type="match status" value="1"/>
</dbReference>
<dbReference type="Pfam" id="PF01134">
    <property type="entry name" value="GIDA"/>
    <property type="match status" value="1"/>
</dbReference>
<dbReference type="Pfam" id="PF21680">
    <property type="entry name" value="GIDA_C_1st"/>
    <property type="match status" value="1"/>
</dbReference>
<dbReference type="Pfam" id="PF13932">
    <property type="entry name" value="SAM_GIDA_C"/>
    <property type="match status" value="1"/>
</dbReference>
<dbReference type="SMART" id="SM01228">
    <property type="entry name" value="GIDA_assoc_3"/>
    <property type="match status" value="1"/>
</dbReference>
<dbReference type="SUPFAM" id="SSF51905">
    <property type="entry name" value="FAD/NAD(P)-binding domain"/>
    <property type="match status" value="1"/>
</dbReference>
<dbReference type="PROSITE" id="PS01280">
    <property type="entry name" value="GIDA_1"/>
    <property type="match status" value="1"/>
</dbReference>
<dbReference type="PROSITE" id="PS01281">
    <property type="entry name" value="GIDA_2"/>
    <property type="match status" value="1"/>
</dbReference>
<organism>
    <name type="scientific">Shewanella frigidimarina (strain NCIMB 400)</name>
    <dbReference type="NCBI Taxonomy" id="318167"/>
    <lineage>
        <taxon>Bacteria</taxon>
        <taxon>Pseudomonadati</taxon>
        <taxon>Pseudomonadota</taxon>
        <taxon>Gammaproteobacteria</taxon>
        <taxon>Alteromonadales</taxon>
        <taxon>Shewanellaceae</taxon>
        <taxon>Shewanella</taxon>
    </lineage>
</organism>
<name>MNMG_SHEFN</name>
<reference key="1">
    <citation type="submission" date="2006-08" db="EMBL/GenBank/DDBJ databases">
        <title>Complete sequence of Shewanella frigidimarina NCIMB 400.</title>
        <authorList>
            <consortium name="US DOE Joint Genome Institute"/>
            <person name="Copeland A."/>
            <person name="Lucas S."/>
            <person name="Lapidus A."/>
            <person name="Barry K."/>
            <person name="Detter J.C."/>
            <person name="Glavina del Rio T."/>
            <person name="Hammon N."/>
            <person name="Israni S."/>
            <person name="Dalin E."/>
            <person name="Tice H."/>
            <person name="Pitluck S."/>
            <person name="Fredrickson J.K."/>
            <person name="Kolker E."/>
            <person name="McCuel L.A."/>
            <person name="DiChristina T."/>
            <person name="Nealson K.H."/>
            <person name="Newman D."/>
            <person name="Tiedje J.M."/>
            <person name="Zhou J."/>
            <person name="Romine M.F."/>
            <person name="Culley D.E."/>
            <person name="Serres M."/>
            <person name="Chertkov O."/>
            <person name="Brettin T."/>
            <person name="Bruce D."/>
            <person name="Han C."/>
            <person name="Tapia R."/>
            <person name="Gilna P."/>
            <person name="Schmutz J."/>
            <person name="Larimer F."/>
            <person name="Land M."/>
            <person name="Hauser L."/>
            <person name="Kyrpides N."/>
            <person name="Mikhailova N."/>
            <person name="Richardson P."/>
        </authorList>
    </citation>
    <scope>NUCLEOTIDE SEQUENCE [LARGE SCALE GENOMIC DNA]</scope>
    <source>
        <strain>NCIMB 400</strain>
    </source>
</reference>
<evidence type="ECO:0000255" key="1">
    <source>
        <dbReference type="HAMAP-Rule" id="MF_00129"/>
    </source>
</evidence>
<proteinExistence type="inferred from homology"/>
<feature type="chain" id="PRO_1000016672" description="tRNA uridine 5-carboxymethylaminomethyl modification enzyme MnmG">
    <location>
        <begin position="1"/>
        <end position="629"/>
    </location>
</feature>
<feature type="binding site" evidence="1">
    <location>
        <begin position="13"/>
        <end position="18"/>
    </location>
    <ligand>
        <name>FAD</name>
        <dbReference type="ChEBI" id="CHEBI:57692"/>
    </ligand>
</feature>
<feature type="binding site" evidence="1">
    <location>
        <begin position="273"/>
        <end position="287"/>
    </location>
    <ligand>
        <name>NAD(+)</name>
        <dbReference type="ChEBI" id="CHEBI:57540"/>
    </ligand>
</feature>
<gene>
    <name evidence="1" type="primary">mnmG</name>
    <name evidence="1" type="synonym">gidA</name>
    <name type="ordered locus">Sfri_4056</name>
</gene>
<accession>Q07VT3</accession>